<gene>
    <name evidence="6" type="primary">CGA1</name>
    <name evidence="7" type="ordered locus">LOC_Os02g12790</name>
    <name evidence="9" type="ordered locus">Os02g0220400</name>
    <name evidence="8" type="ORF">B1131G07.8</name>
</gene>
<keyword id="KW-0479">Metal-binding</keyword>
<keyword id="KW-0539">Nucleus</keyword>
<keyword id="KW-1185">Reference proteome</keyword>
<keyword id="KW-0804">Transcription</keyword>
<keyword id="KW-0805">Transcription regulation</keyword>
<keyword id="KW-0862">Zinc</keyword>
<keyword id="KW-0863">Zinc-finger</keyword>
<proteinExistence type="evidence at transcript level"/>
<feature type="chain" id="PRO_0000444796" description="Protein CYTOKININ-RESPONSIVE GATA TRANSCRIPTION FACTOR 1">
    <location>
        <begin position="1"/>
        <end position="353"/>
    </location>
</feature>
<feature type="zinc finger region" description="GATA-type" evidence="2">
    <location>
        <begin position="178"/>
        <end position="203"/>
    </location>
</feature>
<feature type="region of interest" description="Disordered" evidence="4">
    <location>
        <begin position="142"/>
        <end position="166"/>
    </location>
</feature>
<feature type="short sequence motif" description="Nuclear localization signal 1" evidence="3">
    <location>
        <begin position="137"/>
        <end position="144"/>
    </location>
</feature>
<feature type="short sequence motif" description="Nuclear localization signal 2" evidence="3">
    <location>
        <begin position="244"/>
        <end position="251"/>
    </location>
</feature>
<name>CGA1_ORYSJ</name>
<organism>
    <name type="scientific">Oryza sativa subsp. japonica</name>
    <name type="common">Rice</name>
    <dbReference type="NCBI Taxonomy" id="39947"/>
    <lineage>
        <taxon>Eukaryota</taxon>
        <taxon>Viridiplantae</taxon>
        <taxon>Streptophyta</taxon>
        <taxon>Embryophyta</taxon>
        <taxon>Tracheophyta</taxon>
        <taxon>Spermatophyta</taxon>
        <taxon>Magnoliopsida</taxon>
        <taxon>Liliopsida</taxon>
        <taxon>Poales</taxon>
        <taxon>Poaceae</taxon>
        <taxon>BOP clade</taxon>
        <taxon>Oryzoideae</taxon>
        <taxon>Oryzeae</taxon>
        <taxon>Oryzinae</taxon>
        <taxon>Oryza</taxon>
        <taxon>Oryza sativa</taxon>
    </lineage>
</organism>
<accession>Q6YW48</accession>
<sequence>MSTIYMSQLPATLPLMEGDQDQGLYPAFHRAKDPPILFPFMIDSAVEHQGQIYGDQGLRRQQVLGESNQQFNDHMMMGGSDVFLTPSPFRPTIQSIGSDMIQRSSYDPYDIESNNKQHANGSTSKWMSTPPMKMRIIRKGAATDPEGGAVRKPRRRAQAHQDESQQQLQQALGVVRVCSDCNTTKTPLWRSGPCGPKSLCNACGIRQRKARRAMAAAANGGAAVAPAKSVAAAPVNNKPAAKKEKRAADVDRSLPFKKRCKMVDHVAAAVAATKPTAAGEVVAAAPKDQDHVIVVGGENAAATSMPAQNPISKAAATAAAAAASPAFFHGLPRDEITDAAMLLMTLSCGLVHS</sequence>
<protein>
    <recommendedName>
        <fullName evidence="6">Protein CYTOKININ-RESPONSIVE GATA TRANSCRIPTION FACTOR 1</fullName>
        <shortName evidence="6">OsCGA1</shortName>
    </recommendedName>
</protein>
<comment type="function">
    <text evidence="1 5">Transcriptional regulator that specifically binds 5'-GATA-3' or 5'-GAT-3' motifs within gene promoters (By similarity). Influences the expression of nuclear encoded chloroplast-targeted genes. Regulates chloroplast development and promotes chlorophyll accumulation. Modulates plant architecture (e.g. height, length and width of leaf blades, and flowering tillers production) and represses tillering, probably by modulating number of cells. Promotes senescence. Involved in grain filling, panicle development and starch production (PubMed:23548780).</text>
</comment>
<comment type="subcellular location">
    <subcellularLocation>
        <location evidence="1 3">Nucleus</location>
    </subcellularLocation>
</comment>
<comment type="tissue specificity">
    <text evidence="5">Mostly expressed in leaves and stems, and, at low levels, in roots.</text>
</comment>
<comment type="induction">
    <text evidence="5">Induced by light, nitrogen, and cytokinin (benzyladenine) treatments, but repressed by darkness and gibberellin (GA).</text>
</comment>
<comment type="disruption phenotype">
    <text evidence="5">Reduced chlorophyll, reduced height and increased tillering.</text>
</comment>
<comment type="similarity">
    <text evidence="7">Belongs to the type IV zinc-finger family. Class B subfamily.</text>
</comment>
<reference key="1">
    <citation type="journal article" date="2005" name="Nature">
        <title>The map-based sequence of the rice genome.</title>
        <authorList>
            <consortium name="International rice genome sequencing project (IRGSP)"/>
        </authorList>
    </citation>
    <scope>NUCLEOTIDE SEQUENCE [LARGE SCALE GENOMIC DNA]</scope>
    <source>
        <strain>cv. Nipponbare</strain>
    </source>
</reference>
<reference key="2">
    <citation type="journal article" date="2008" name="Nucleic Acids Res.">
        <title>The rice annotation project database (RAP-DB): 2008 update.</title>
        <authorList>
            <consortium name="The rice annotation project (RAP)"/>
        </authorList>
    </citation>
    <scope>GENOME REANNOTATION</scope>
    <source>
        <strain>cv. Nipponbare</strain>
    </source>
</reference>
<reference key="3">
    <citation type="journal article" date="2013" name="Rice">
        <title>Improvement of the Oryza sativa Nipponbare reference genome using next generation sequence and optical map data.</title>
        <authorList>
            <person name="Kawahara Y."/>
            <person name="de la Bastide M."/>
            <person name="Hamilton J.P."/>
            <person name="Kanamori H."/>
            <person name="McCombie W.R."/>
            <person name="Ouyang S."/>
            <person name="Schwartz D.C."/>
            <person name="Tanaka T."/>
            <person name="Wu J."/>
            <person name="Zhou S."/>
            <person name="Childs K.L."/>
            <person name="Davidson R.M."/>
            <person name="Lin H."/>
            <person name="Quesada-Ocampo L."/>
            <person name="Vaillancourt B."/>
            <person name="Sakai H."/>
            <person name="Lee S.S."/>
            <person name="Kim J."/>
            <person name="Numa H."/>
            <person name="Itoh T."/>
            <person name="Buell C.R."/>
            <person name="Matsumoto T."/>
        </authorList>
    </citation>
    <scope>GENOME REANNOTATION</scope>
    <source>
        <strain>cv. Nipponbare</strain>
    </source>
</reference>
<reference key="4">
    <citation type="journal article" date="2003" name="Science">
        <title>Collection, mapping, and annotation of over 28,000 cDNA clones from japonica rice.</title>
        <authorList>
            <consortium name="The rice full-length cDNA consortium"/>
        </authorList>
    </citation>
    <scope>NUCLEOTIDE SEQUENCE [LARGE SCALE MRNA]</scope>
    <source>
        <strain>cv. Nipponbare</strain>
    </source>
</reference>
<reference key="5">
    <citation type="journal article" date="2013" name="Plant Physiol.">
        <title>Rice cytokinin GATA transcription Factor1 regulates chloroplast development and plant architecture.</title>
        <authorList>
            <person name="Hudson D."/>
            <person name="Guevara D.R."/>
            <person name="Hand A.J."/>
            <person name="Xu Z."/>
            <person name="Hao L."/>
            <person name="Chen X."/>
            <person name="Zhu T."/>
            <person name="Bi Y.-M."/>
            <person name="Rothstein S.J."/>
        </authorList>
    </citation>
    <scope>FUNCTION</scope>
    <scope>INDUCTION BY LIGHT; NITROGEN; CYTOKININ; DARKNESS AND GIBBERELLIN</scope>
    <scope>DISRUPTION PHENOTYPE</scope>
    <scope>TISSUE SPECIFICITY</scope>
</reference>
<reference key="6">
    <citation type="journal article" date="2015" name="Front. Plant Sci.">
        <title>B-GATA transcription factors - insights into their structure, regulation, and role in plant development.</title>
        <authorList>
            <person name="Behringer C."/>
            <person name="Schwechheimer C."/>
        </authorList>
    </citation>
    <scope>GENE FAMILY</scope>
    <scope>REVIEW</scope>
</reference>
<evidence type="ECO:0000250" key="1">
    <source>
        <dbReference type="UniProtKB" id="Q9SZI6"/>
    </source>
</evidence>
<evidence type="ECO:0000255" key="2">
    <source>
        <dbReference type="PROSITE-ProRule" id="PRU00094"/>
    </source>
</evidence>
<evidence type="ECO:0000255" key="3">
    <source>
        <dbReference type="PROSITE-ProRule" id="PRU00768"/>
    </source>
</evidence>
<evidence type="ECO:0000256" key="4">
    <source>
        <dbReference type="SAM" id="MobiDB-lite"/>
    </source>
</evidence>
<evidence type="ECO:0000269" key="5">
    <source>
    </source>
</evidence>
<evidence type="ECO:0000303" key="6">
    <source>
    </source>
</evidence>
<evidence type="ECO:0000305" key="7"/>
<evidence type="ECO:0000312" key="8">
    <source>
        <dbReference type="EMBL" id="BAD17612.1"/>
    </source>
</evidence>
<evidence type="ECO:0000312" key="9">
    <source>
        <dbReference type="EMBL" id="BAS77697.1"/>
    </source>
</evidence>
<dbReference type="EMBL" id="AP005797">
    <property type="protein sequence ID" value="BAD17612.1"/>
    <property type="molecule type" value="Genomic_DNA"/>
</dbReference>
<dbReference type="EMBL" id="AP008208">
    <property type="protein sequence ID" value="BAF08230.1"/>
    <property type="molecule type" value="Genomic_DNA"/>
</dbReference>
<dbReference type="EMBL" id="AP014958">
    <property type="protein sequence ID" value="BAS77697.1"/>
    <property type="molecule type" value="Genomic_DNA"/>
</dbReference>
<dbReference type="EMBL" id="AK099607">
    <property type="protein sequence ID" value="BAG94221.1"/>
    <property type="molecule type" value="mRNA"/>
</dbReference>
<dbReference type="FunCoup" id="Q6YW48">
    <property type="interactions" value="192"/>
</dbReference>
<dbReference type="STRING" id="39947.Q6YW48"/>
<dbReference type="PaxDb" id="39947-Q6YW48"/>
<dbReference type="EnsemblPlants" id="Os02t0220400-01">
    <property type="protein sequence ID" value="Os02t0220400-01"/>
    <property type="gene ID" value="Os02g0220400"/>
</dbReference>
<dbReference type="GeneID" id="4328751"/>
<dbReference type="Gramene" id="Os02t0220400-01">
    <property type="protein sequence ID" value="Os02t0220400-01"/>
    <property type="gene ID" value="Os02g0220400"/>
</dbReference>
<dbReference type="KEGG" id="dosa:Os02g0220400"/>
<dbReference type="KEGG" id="osa:4328751"/>
<dbReference type="eggNOG" id="KOG1601">
    <property type="taxonomic scope" value="Eukaryota"/>
</dbReference>
<dbReference type="HOGENOM" id="CLU_059658_0_0_1"/>
<dbReference type="InParanoid" id="Q6YW48"/>
<dbReference type="OMA" id="KRCKMVV"/>
<dbReference type="OrthoDB" id="2162994at2759"/>
<dbReference type="Proteomes" id="UP000000763">
    <property type="component" value="Chromosome 2"/>
</dbReference>
<dbReference type="Proteomes" id="UP000059680">
    <property type="component" value="Chromosome 2"/>
</dbReference>
<dbReference type="GO" id="GO:0005634">
    <property type="term" value="C:nucleus"/>
    <property type="evidence" value="ECO:0007669"/>
    <property type="project" value="UniProtKB-SubCell"/>
</dbReference>
<dbReference type="GO" id="GO:0043565">
    <property type="term" value="F:sequence-specific DNA binding"/>
    <property type="evidence" value="ECO:0007669"/>
    <property type="project" value="InterPro"/>
</dbReference>
<dbReference type="GO" id="GO:0008270">
    <property type="term" value="F:zinc ion binding"/>
    <property type="evidence" value="ECO:0007669"/>
    <property type="project" value="UniProtKB-KW"/>
</dbReference>
<dbReference type="GO" id="GO:0009658">
    <property type="term" value="P:chloroplast organization"/>
    <property type="evidence" value="ECO:0000315"/>
    <property type="project" value="UniProtKB"/>
</dbReference>
<dbReference type="GO" id="GO:0099402">
    <property type="term" value="P:plant organ development"/>
    <property type="evidence" value="ECO:0000315"/>
    <property type="project" value="UniProtKB"/>
</dbReference>
<dbReference type="GO" id="GO:0006355">
    <property type="term" value="P:regulation of DNA-templated transcription"/>
    <property type="evidence" value="ECO:0007669"/>
    <property type="project" value="InterPro"/>
</dbReference>
<dbReference type="GO" id="GO:0009909">
    <property type="term" value="P:regulation of flower development"/>
    <property type="evidence" value="ECO:0000315"/>
    <property type="project" value="UniProtKB"/>
</dbReference>
<dbReference type="GO" id="GO:0009646">
    <property type="term" value="P:response to absence of light"/>
    <property type="evidence" value="ECO:0000270"/>
    <property type="project" value="UniProtKB"/>
</dbReference>
<dbReference type="GO" id="GO:0009735">
    <property type="term" value="P:response to cytokinin"/>
    <property type="evidence" value="ECO:0000270"/>
    <property type="project" value="UniProtKB"/>
</dbReference>
<dbReference type="GO" id="GO:0009739">
    <property type="term" value="P:response to gibberellin"/>
    <property type="evidence" value="ECO:0000270"/>
    <property type="project" value="UniProtKB"/>
</dbReference>
<dbReference type="GO" id="GO:0009416">
    <property type="term" value="P:response to light stimulus"/>
    <property type="evidence" value="ECO:0000270"/>
    <property type="project" value="UniProtKB"/>
</dbReference>
<dbReference type="GO" id="GO:1901698">
    <property type="term" value="P:response to nitrogen compound"/>
    <property type="evidence" value="ECO:0000270"/>
    <property type="project" value="UniProtKB"/>
</dbReference>
<dbReference type="CDD" id="cd00202">
    <property type="entry name" value="ZnF_GATA"/>
    <property type="match status" value="1"/>
</dbReference>
<dbReference type="FunFam" id="3.30.50.10:FF:000055">
    <property type="entry name" value="GATA transcription factor 21"/>
    <property type="match status" value="1"/>
</dbReference>
<dbReference type="Gene3D" id="3.30.50.10">
    <property type="entry name" value="Erythroid Transcription Factor GATA-1, subunit A"/>
    <property type="match status" value="1"/>
</dbReference>
<dbReference type="InterPro" id="IPR052138">
    <property type="entry name" value="GATA_ZnFinger_Domain"/>
</dbReference>
<dbReference type="InterPro" id="IPR000679">
    <property type="entry name" value="Znf_GATA"/>
</dbReference>
<dbReference type="InterPro" id="IPR013088">
    <property type="entry name" value="Znf_NHR/GATA"/>
</dbReference>
<dbReference type="PANTHER" id="PTHR47255">
    <property type="entry name" value="GATA TRANSCRIPTION FACTOR 22-RELATED"/>
    <property type="match status" value="1"/>
</dbReference>
<dbReference type="PANTHER" id="PTHR47255:SF14">
    <property type="entry name" value="PROTEIN CYTOKININ-RESPONSIVE GATA TRANSCRIPTION FACTOR 1"/>
    <property type="match status" value="1"/>
</dbReference>
<dbReference type="Pfam" id="PF00320">
    <property type="entry name" value="GATA"/>
    <property type="match status" value="1"/>
</dbReference>
<dbReference type="SMART" id="SM00401">
    <property type="entry name" value="ZnF_GATA"/>
    <property type="match status" value="1"/>
</dbReference>
<dbReference type="SUPFAM" id="SSF57716">
    <property type="entry name" value="Glucocorticoid receptor-like (DNA-binding domain)"/>
    <property type="match status" value="1"/>
</dbReference>
<dbReference type="PROSITE" id="PS00344">
    <property type="entry name" value="GATA_ZN_FINGER_1"/>
    <property type="match status" value="1"/>
</dbReference>
<dbReference type="PROSITE" id="PS50114">
    <property type="entry name" value="GATA_ZN_FINGER_2"/>
    <property type="match status" value="1"/>
</dbReference>